<name>CHM2B_DANRE</name>
<keyword id="KW-0175">Coiled coil</keyword>
<keyword id="KW-0963">Cytoplasm</keyword>
<keyword id="KW-0967">Endosome</keyword>
<keyword id="KW-0472">Membrane</keyword>
<keyword id="KW-0653">Protein transport</keyword>
<keyword id="KW-1185">Reference proteome</keyword>
<keyword id="KW-0813">Transport</keyword>
<protein>
    <recommendedName>
        <fullName>Charged multivesicular body protein 2b</fullName>
    </recommendedName>
    <alternativeName>
        <fullName>Chromatin-modifying protein 2b</fullName>
        <shortName>CHMP2b</shortName>
    </alternativeName>
</protein>
<evidence type="ECO:0000250" key="1"/>
<evidence type="ECO:0000255" key="2"/>
<evidence type="ECO:0000256" key="3">
    <source>
        <dbReference type="SAM" id="MobiDB-lite"/>
    </source>
</evidence>
<evidence type="ECO:0000305" key="4"/>
<accession>Q6NXD2</accession>
<accession>A2AVM3</accession>
<reference key="1">
    <citation type="journal article" date="2013" name="Nature">
        <title>The zebrafish reference genome sequence and its relationship to the human genome.</title>
        <authorList>
            <person name="Howe K."/>
            <person name="Clark M.D."/>
            <person name="Torroja C.F."/>
            <person name="Torrance J."/>
            <person name="Berthelot C."/>
            <person name="Muffato M."/>
            <person name="Collins J.E."/>
            <person name="Humphray S."/>
            <person name="McLaren K."/>
            <person name="Matthews L."/>
            <person name="McLaren S."/>
            <person name="Sealy I."/>
            <person name="Caccamo M."/>
            <person name="Churcher C."/>
            <person name="Scott C."/>
            <person name="Barrett J.C."/>
            <person name="Koch R."/>
            <person name="Rauch G.J."/>
            <person name="White S."/>
            <person name="Chow W."/>
            <person name="Kilian B."/>
            <person name="Quintais L.T."/>
            <person name="Guerra-Assuncao J.A."/>
            <person name="Zhou Y."/>
            <person name="Gu Y."/>
            <person name="Yen J."/>
            <person name="Vogel J.H."/>
            <person name="Eyre T."/>
            <person name="Redmond S."/>
            <person name="Banerjee R."/>
            <person name="Chi J."/>
            <person name="Fu B."/>
            <person name="Langley E."/>
            <person name="Maguire S.F."/>
            <person name="Laird G.K."/>
            <person name="Lloyd D."/>
            <person name="Kenyon E."/>
            <person name="Donaldson S."/>
            <person name="Sehra H."/>
            <person name="Almeida-King J."/>
            <person name="Loveland J."/>
            <person name="Trevanion S."/>
            <person name="Jones M."/>
            <person name="Quail M."/>
            <person name="Willey D."/>
            <person name="Hunt A."/>
            <person name="Burton J."/>
            <person name="Sims S."/>
            <person name="McLay K."/>
            <person name="Plumb B."/>
            <person name="Davis J."/>
            <person name="Clee C."/>
            <person name="Oliver K."/>
            <person name="Clark R."/>
            <person name="Riddle C."/>
            <person name="Elliot D."/>
            <person name="Threadgold G."/>
            <person name="Harden G."/>
            <person name="Ware D."/>
            <person name="Begum S."/>
            <person name="Mortimore B."/>
            <person name="Kerry G."/>
            <person name="Heath P."/>
            <person name="Phillimore B."/>
            <person name="Tracey A."/>
            <person name="Corby N."/>
            <person name="Dunn M."/>
            <person name="Johnson C."/>
            <person name="Wood J."/>
            <person name="Clark S."/>
            <person name="Pelan S."/>
            <person name="Griffiths G."/>
            <person name="Smith M."/>
            <person name="Glithero R."/>
            <person name="Howden P."/>
            <person name="Barker N."/>
            <person name="Lloyd C."/>
            <person name="Stevens C."/>
            <person name="Harley J."/>
            <person name="Holt K."/>
            <person name="Panagiotidis G."/>
            <person name="Lovell J."/>
            <person name="Beasley H."/>
            <person name="Henderson C."/>
            <person name="Gordon D."/>
            <person name="Auger K."/>
            <person name="Wright D."/>
            <person name="Collins J."/>
            <person name="Raisen C."/>
            <person name="Dyer L."/>
            <person name="Leung K."/>
            <person name="Robertson L."/>
            <person name="Ambridge K."/>
            <person name="Leongamornlert D."/>
            <person name="McGuire S."/>
            <person name="Gilderthorp R."/>
            <person name="Griffiths C."/>
            <person name="Manthravadi D."/>
            <person name="Nichol S."/>
            <person name="Barker G."/>
            <person name="Whitehead S."/>
            <person name="Kay M."/>
            <person name="Brown J."/>
            <person name="Murnane C."/>
            <person name="Gray E."/>
            <person name="Humphries M."/>
            <person name="Sycamore N."/>
            <person name="Barker D."/>
            <person name="Saunders D."/>
            <person name="Wallis J."/>
            <person name="Babbage A."/>
            <person name="Hammond S."/>
            <person name="Mashreghi-Mohammadi M."/>
            <person name="Barr L."/>
            <person name="Martin S."/>
            <person name="Wray P."/>
            <person name="Ellington A."/>
            <person name="Matthews N."/>
            <person name="Ellwood M."/>
            <person name="Woodmansey R."/>
            <person name="Clark G."/>
            <person name="Cooper J."/>
            <person name="Tromans A."/>
            <person name="Grafham D."/>
            <person name="Skuce C."/>
            <person name="Pandian R."/>
            <person name="Andrews R."/>
            <person name="Harrison E."/>
            <person name="Kimberley A."/>
            <person name="Garnett J."/>
            <person name="Fosker N."/>
            <person name="Hall R."/>
            <person name="Garner P."/>
            <person name="Kelly D."/>
            <person name="Bird C."/>
            <person name="Palmer S."/>
            <person name="Gehring I."/>
            <person name="Berger A."/>
            <person name="Dooley C.M."/>
            <person name="Ersan-Urun Z."/>
            <person name="Eser C."/>
            <person name="Geiger H."/>
            <person name="Geisler M."/>
            <person name="Karotki L."/>
            <person name="Kirn A."/>
            <person name="Konantz J."/>
            <person name="Konantz M."/>
            <person name="Oberlander M."/>
            <person name="Rudolph-Geiger S."/>
            <person name="Teucke M."/>
            <person name="Lanz C."/>
            <person name="Raddatz G."/>
            <person name="Osoegawa K."/>
            <person name="Zhu B."/>
            <person name="Rapp A."/>
            <person name="Widaa S."/>
            <person name="Langford C."/>
            <person name="Yang F."/>
            <person name="Schuster S.C."/>
            <person name="Carter N.P."/>
            <person name="Harrow J."/>
            <person name="Ning Z."/>
            <person name="Herrero J."/>
            <person name="Searle S.M."/>
            <person name="Enright A."/>
            <person name="Geisler R."/>
            <person name="Plasterk R.H."/>
            <person name="Lee C."/>
            <person name="Westerfield M."/>
            <person name="de Jong P.J."/>
            <person name="Zon L.I."/>
            <person name="Postlethwait J.H."/>
            <person name="Nusslein-Volhard C."/>
            <person name="Hubbard T.J."/>
            <person name="Roest Crollius H."/>
            <person name="Rogers J."/>
            <person name="Stemple D.L."/>
        </authorList>
    </citation>
    <scope>NUCLEOTIDE SEQUENCE [LARGE SCALE GENOMIC DNA]</scope>
    <source>
        <strain>Tuebingen</strain>
    </source>
</reference>
<reference key="2">
    <citation type="submission" date="2004-03" db="EMBL/GenBank/DDBJ databases">
        <authorList>
            <consortium name="NIH - Zebrafish Gene Collection (ZGC) project"/>
        </authorList>
    </citation>
    <scope>NUCLEOTIDE SEQUENCE [LARGE SCALE MRNA]</scope>
    <source>
        <tissue>Kidney</tissue>
    </source>
</reference>
<organism>
    <name type="scientific">Danio rerio</name>
    <name type="common">Zebrafish</name>
    <name type="synonym">Brachydanio rerio</name>
    <dbReference type="NCBI Taxonomy" id="7955"/>
    <lineage>
        <taxon>Eukaryota</taxon>
        <taxon>Metazoa</taxon>
        <taxon>Chordata</taxon>
        <taxon>Craniata</taxon>
        <taxon>Vertebrata</taxon>
        <taxon>Euteleostomi</taxon>
        <taxon>Actinopterygii</taxon>
        <taxon>Neopterygii</taxon>
        <taxon>Teleostei</taxon>
        <taxon>Ostariophysi</taxon>
        <taxon>Cypriniformes</taxon>
        <taxon>Danionidae</taxon>
        <taxon>Danioninae</taxon>
        <taxon>Danio</taxon>
    </lineage>
</organism>
<gene>
    <name type="primary">chmp2b</name>
    <name type="ORF">si:ch211-106g5.3</name>
    <name type="ORF">zgc:77025</name>
</gene>
<comment type="function">
    <text evidence="1">Probable core component of the endosomal sorting required for transport complex III (ESCRT-III) which is involved in multivesicular bodies (MVBs) formation and sorting of endosomal cargo proteins into MVBs. MVBs contain intraluminal vesicles (ILVs) that are generated by invagination and scission from the limiting membrane of the endosome and mostly are delivered to lysosomes enabling degradation of membrane proteins, such as stimulated growth factor receptors, lysosomal enzymes and lipids (By similarity).</text>
</comment>
<comment type="subunit">
    <text evidence="1">Probable core component of the endosomal sorting required for transport complex III (ESCRT-III). ESCRT-III components are thought to multimerize to form a flat lattice on the perimeter membrane of the endosome (By similarity).</text>
</comment>
<comment type="subcellular location">
    <subcellularLocation>
        <location evidence="1">Cytoplasm</location>
        <location evidence="1">Cytosol</location>
    </subcellularLocation>
    <subcellularLocation>
        <location evidence="1">Late endosome membrane</location>
        <topology evidence="1">Peripheral membrane protein</topology>
    </subcellularLocation>
</comment>
<comment type="similarity">
    <text evidence="4">Belongs to the SNF7 family.</text>
</comment>
<dbReference type="EMBL" id="AL929559">
    <property type="protein sequence ID" value="CAM13123.1"/>
    <property type="molecule type" value="Genomic_DNA"/>
</dbReference>
<dbReference type="EMBL" id="BC067142">
    <property type="protein sequence ID" value="AAH67142.1"/>
    <property type="molecule type" value="mRNA"/>
</dbReference>
<dbReference type="RefSeq" id="NP_998069.1">
    <property type="nucleotide sequence ID" value="NM_212904.2"/>
</dbReference>
<dbReference type="SMR" id="Q6NXD2"/>
<dbReference type="FunCoup" id="Q6NXD2">
    <property type="interactions" value="587"/>
</dbReference>
<dbReference type="STRING" id="7955.ENSDARP00000008354"/>
<dbReference type="PaxDb" id="7955-ENSDARP00000008354"/>
<dbReference type="Ensembl" id="ENSDART00000018472">
    <property type="protein sequence ID" value="ENSDARP00000008354"/>
    <property type="gene ID" value="ENSDARG00000002190"/>
</dbReference>
<dbReference type="GeneID" id="405840"/>
<dbReference type="KEGG" id="dre:405840"/>
<dbReference type="AGR" id="ZFIN:ZDB-GENE-040426-2539"/>
<dbReference type="CTD" id="405840"/>
<dbReference type="ZFIN" id="ZDB-GENE-040426-2539">
    <property type="gene designation" value="chmp2bb"/>
</dbReference>
<dbReference type="eggNOG" id="KOG3231">
    <property type="taxonomic scope" value="Eukaryota"/>
</dbReference>
<dbReference type="HOGENOM" id="CLU_069208_1_2_1"/>
<dbReference type="InParanoid" id="Q6NXD2"/>
<dbReference type="OMA" id="EIMRMEM"/>
<dbReference type="OrthoDB" id="5594417at2759"/>
<dbReference type="PhylomeDB" id="Q6NXD2"/>
<dbReference type="PRO" id="PR:Q6NXD2"/>
<dbReference type="Proteomes" id="UP000000437">
    <property type="component" value="Chromosome 1"/>
</dbReference>
<dbReference type="Bgee" id="ENSDARG00000002190">
    <property type="expression patterns" value="Expressed in mature ovarian follicle and 29 other cell types or tissues"/>
</dbReference>
<dbReference type="GO" id="GO:0005829">
    <property type="term" value="C:cytosol"/>
    <property type="evidence" value="ECO:0007669"/>
    <property type="project" value="UniProtKB-SubCell"/>
</dbReference>
<dbReference type="GO" id="GO:0000815">
    <property type="term" value="C:ESCRT III complex"/>
    <property type="evidence" value="ECO:0000318"/>
    <property type="project" value="GO_Central"/>
</dbReference>
<dbReference type="GO" id="GO:0031902">
    <property type="term" value="C:late endosome membrane"/>
    <property type="evidence" value="ECO:0007669"/>
    <property type="project" value="UniProtKB-SubCell"/>
</dbReference>
<dbReference type="GO" id="GO:0005771">
    <property type="term" value="C:multivesicular body"/>
    <property type="evidence" value="ECO:0000318"/>
    <property type="project" value="GO_Central"/>
</dbReference>
<dbReference type="GO" id="GO:0032509">
    <property type="term" value="P:endosome transport via multivesicular body sorting pathway"/>
    <property type="evidence" value="ECO:0000318"/>
    <property type="project" value="GO_Central"/>
</dbReference>
<dbReference type="GO" id="GO:0045324">
    <property type="term" value="P:late endosome to vacuole transport"/>
    <property type="evidence" value="ECO:0000318"/>
    <property type="project" value="GO_Central"/>
</dbReference>
<dbReference type="GO" id="GO:0015031">
    <property type="term" value="P:protein transport"/>
    <property type="evidence" value="ECO:0000318"/>
    <property type="project" value="GO_Central"/>
</dbReference>
<dbReference type="Gene3D" id="6.10.140.1230">
    <property type="match status" value="1"/>
</dbReference>
<dbReference type="InterPro" id="IPR005024">
    <property type="entry name" value="Snf7_fam"/>
</dbReference>
<dbReference type="PANTHER" id="PTHR10476">
    <property type="entry name" value="CHARGED MULTIVESICULAR BODY PROTEIN"/>
    <property type="match status" value="1"/>
</dbReference>
<dbReference type="Pfam" id="PF03357">
    <property type="entry name" value="Snf7"/>
    <property type="match status" value="1"/>
</dbReference>
<sequence>MTSLFKKKTVDDVIKEQNKELRGTQRQIARDRTALEKQEKQLEMEIKKMAKTGNRDACKVLAKQLVQVRKQKTRTYAVSSKVTSMSTQTKLMNSQMKMAGAMATTTKTMQAVNKKMDPKKTMQTLQNFQKETAKMDMTEEMMNDTLDEIFEDSGDEEESQDIVNQVLDEIGIEISGKMAHAPSAARKTPSAATAKADGISDEDIERQLKALGVD</sequence>
<feature type="chain" id="PRO_0000211473" description="Charged multivesicular body protein 2b">
    <location>
        <begin position="1"/>
        <end position="214"/>
    </location>
</feature>
<feature type="region of interest" description="Disordered" evidence="3">
    <location>
        <begin position="178"/>
        <end position="199"/>
    </location>
</feature>
<feature type="coiled-coil region" evidence="2">
    <location>
        <begin position="25"/>
        <end position="55"/>
    </location>
</feature>
<feature type="short sequence motif" description="MIT-interacting motif">
    <location>
        <begin position="202"/>
        <end position="212"/>
    </location>
</feature>
<proteinExistence type="evidence at transcript level"/>